<sequence>MGKRPNFGGMGMGNMQGLIKQAKKMQQQMEAEQANLATQEFVGKAADDMVVATFSGDRKLKDLKINKEAIDPDDPDMLQDLVIDAVNKGIKAVDDATQASMGKYTKGLM</sequence>
<accession>Q74L00</accession>
<organism>
    <name type="scientific">Lactobacillus johnsonii (strain CNCM I-12250 / La1 / NCC 533)</name>
    <dbReference type="NCBI Taxonomy" id="257314"/>
    <lineage>
        <taxon>Bacteria</taxon>
        <taxon>Bacillati</taxon>
        <taxon>Bacillota</taxon>
        <taxon>Bacilli</taxon>
        <taxon>Lactobacillales</taxon>
        <taxon>Lactobacillaceae</taxon>
        <taxon>Lactobacillus</taxon>
    </lineage>
</organism>
<comment type="function">
    <text evidence="1">Binds to DNA and alters its conformation. May be involved in regulation of gene expression, nucleoid organization and DNA protection.</text>
</comment>
<comment type="subunit">
    <text evidence="1">Homodimer.</text>
</comment>
<comment type="subcellular location">
    <subcellularLocation>
        <location evidence="1">Cytoplasm</location>
        <location evidence="1">Nucleoid</location>
    </subcellularLocation>
</comment>
<comment type="similarity">
    <text evidence="1">Belongs to the YbaB/EbfC family.</text>
</comment>
<name>Y424_LACJO</name>
<keyword id="KW-0963">Cytoplasm</keyword>
<keyword id="KW-0238">DNA-binding</keyword>
<proteinExistence type="inferred from homology"/>
<reference key="1">
    <citation type="journal article" date="2004" name="Proc. Natl. Acad. Sci. U.S.A.">
        <title>The genome sequence of the probiotic intestinal bacterium Lactobacillus johnsonii NCC 533.</title>
        <authorList>
            <person name="Pridmore R.D."/>
            <person name="Berger B."/>
            <person name="Desiere F."/>
            <person name="Vilanova D."/>
            <person name="Barretto C."/>
            <person name="Pittet A.-C."/>
            <person name="Zwahlen M.-C."/>
            <person name="Rouvet M."/>
            <person name="Altermann E."/>
            <person name="Barrangou R."/>
            <person name="Mollet B."/>
            <person name="Mercenier A."/>
            <person name="Klaenhammer T."/>
            <person name="Arigoni F."/>
            <person name="Schell M.A."/>
        </authorList>
    </citation>
    <scope>NUCLEOTIDE SEQUENCE [LARGE SCALE GENOMIC DNA]</scope>
    <source>
        <strain>CNCM I-1225 / La1 / NCC 533</strain>
    </source>
</reference>
<gene>
    <name type="ordered locus">LJ_0424</name>
</gene>
<evidence type="ECO:0000255" key="1">
    <source>
        <dbReference type="HAMAP-Rule" id="MF_00274"/>
    </source>
</evidence>
<protein>
    <recommendedName>
        <fullName evidence="1">Nucleoid-associated protein LJ_0424</fullName>
    </recommendedName>
</protein>
<dbReference type="EMBL" id="AE017198">
    <property type="protein sequence ID" value="AAS08415.1"/>
    <property type="molecule type" value="Genomic_DNA"/>
</dbReference>
<dbReference type="RefSeq" id="WP_004896740.1">
    <property type="nucleotide sequence ID" value="NC_005362.1"/>
</dbReference>
<dbReference type="SMR" id="Q74L00"/>
<dbReference type="KEGG" id="ljo:LJ_0424"/>
<dbReference type="eggNOG" id="COG0718">
    <property type="taxonomic scope" value="Bacteria"/>
</dbReference>
<dbReference type="HOGENOM" id="CLU_140930_1_1_9"/>
<dbReference type="Proteomes" id="UP000000581">
    <property type="component" value="Chromosome"/>
</dbReference>
<dbReference type="GO" id="GO:0043590">
    <property type="term" value="C:bacterial nucleoid"/>
    <property type="evidence" value="ECO:0007669"/>
    <property type="project" value="UniProtKB-UniRule"/>
</dbReference>
<dbReference type="GO" id="GO:0005829">
    <property type="term" value="C:cytosol"/>
    <property type="evidence" value="ECO:0007669"/>
    <property type="project" value="TreeGrafter"/>
</dbReference>
<dbReference type="GO" id="GO:0003677">
    <property type="term" value="F:DNA binding"/>
    <property type="evidence" value="ECO:0007669"/>
    <property type="project" value="UniProtKB-UniRule"/>
</dbReference>
<dbReference type="Gene3D" id="3.30.1310.10">
    <property type="entry name" value="Nucleoid-associated protein YbaB-like domain"/>
    <property type="match status" value="1"/>
</dbReference>
<dbReference type="HAMAP" id="MF_00274">
    <property type="entry name" value="DNA_YbaB_EbfC"/>
    <property type="match status" value="1"/>
</dbReference>
<dbReference type="InterPro" id="IPR036894">
    <property type="entry name" value="YbaB-like_sf"/>
</dbReference>
<dbReference type="InterPro" id="IPR004401">
    <property type="entry name" value="YbaB/EbfC"/>
</dbReference>
<dbReference type="NCBIfam" id="TIGR00103">
    <property type="entry name" value="DNA_YbaB_EbfC"/>
    <property type="match status" value="1"/>
</dbReference>
<dbReference type="PANTHER" id="PTHR33449">
    <property type="entry name" value="NUCLEOID-ASSOCIATED PROTEIN YBAB"/>
    <property type="match status" value="1"/>
</dbReference>
<dbReference type="PANTHER" id="PTHR33449:SF1">
    <property type="entry name" value="NUCLEOID-ASSOCIATED PROTEIN YBAB"/>
    <property type="match status" value="1"/>
</dbReference>
<dbReference type="Pfam" id="PF02575">
    <property type="entry name" value="YbaB_DNA_bd"/>
    <property type="match status" value="1"/>
</dbReference>
<dbReference type="PIRSF" id="PIRSF004555">
    <property type="entry name" value="UCP004555"/>
    <property type="match status" value="1"/>
</dbReference>
<dbReference type="SUPFAM" id="SSF82607">
    <property type="entry name" value="YbaB-like"/>
    <property type="match status" value="1"/>
</dbReference>
<feature type="chain" id="PRO_1000197663" description="Nucleoid-associated protein LJ_0424">
    <location>
        <begin position="1"/>
        <end position="109"/>
    </location>
</feature>